<name>ARGN1_XENLA</name>
<protein>
    <recommendedName>
        <fullName>Arginase, non-hepatic 1</fullName>
        <ecNumber evidence="2">3.5.3.1</ecNumber>
    </recommendedName>
</protein>
<proteinExistence type="evidence at transcript level"/>
<keyword id="KW-0056">Arginine metabolism</keyword>
<keyword id="KW-0378">Hydrolase</keyword>
<keyword id="KW-0464">Manganese</keyword>
<keyword id="KW-0479">Metal-binding</keyword>
<keyword id="KW-1185">Reference proteome</keyword>
<keyword id="KW-0835">Urea cycle</keyword>
<comment type="function">
    <text>As well as its role in the urea cycle, may be involved in tissue remodeling.</text>
</comment>
<comment type="catalytic activity">
    <reaction evidence="2">
        <text>L-arginine + H2O = urea + L-ornithine</text>
        <dbReference type="Rhea" id="RHEA:20569"/>
        <dbReference type="ChEBI" id="CHEBI:15377"/>
        <dbReference type="ChEBI" id="CHEBI:16199"/>
        <dbReference type="ChEBI" id="CHEBI:32682"/>
        <dbReference type="ChEBI" id="CHEBI:46911"/>
        <dbReference type="EC" id="3.5.3.1"/>
    </reaction>
</comment>
<comment type="cofactor">
    <cofactor evidence="5">
        <name>Mn(2+)</name>
        <dbReference type="ChEBI" id="CHEBI:29035"/>
    </cofactor>
    <text evidence="5">Binds 2 manganese ions per subunit.</text>
</comment>
<comment type="pathway">
    <text evidence="2">Nitrogen metabolism; urea cycle; L-ornithine and urea from L-arginine: step 1/1.</text>
</comment>
<comment type="subunit">
    <text evidence="1">Homotrimer.</text>
</comment>
<comment type="tissue specificity">
    <text>Expressed at differing tadpole stages in tail, intestine, hindlimb and trunk region. Most abundant in tadpole tail.</text>
</comment>
<comment type="developmental stage">
    <text>First detected in neurula (stage 16/17). Highest levels in whole tadpole found around stage 47/48. In the intestine, increased levels are found during metamorphosis (stages 58-64). Low levels expressed in hindlimb until stage 66 after which, levels dramatically increase. In the tail, a constant high level of expression is found throughout metamorphosis.</text>
</comment>
<comment type="induction">
    <text>By thyroid hormone (T3).</text>
</comment>
<comment type="similarity">
    <text evidence="5">Belongs to the arginase family.</text>
</comment>
<organism>
    <name type="scientific">Xenopus laevis</name>
    <name type="common">African clawed frog</name>
    <dbReference type="NCBI Taxonomy" id="8355"/>
    <lineage>
        <taxon>Eukaryota</taxon>
        <taxon>Metazoa</taxon>
        <taxon>Chordata</taxon>
        <taxon>Craniata</taxon>
        <taxon>Vertebrata</taxon>
        <taxon>Euteleostomi</taxon>
        <taxon>Amphibia</taxon>
        <taxon>Batrachia</taxon>
        <taxon>Anura</taxon>
        <taxon>Pipoidea</taxon>
        <taxon>Pipidae</taxon>
        <taxon>Xenopodinae</taxon>
        <taxon>Xenopus</taxon>
        <taxon>Xenopus</taxon>
    </lineage>
</organism>
<reference key="1">
    <citation type="journal article" date="1994" name="J. Biol. Chem.">
        <title>Thyroid hormone-dependent differential regulation of multiple arginase genes during amphibian metamorphosis.</title>
        <authorList>
            <person name="Patterton D."/>
            <person name="Shi Y.-B."/>
        </authorList>
    </citation>
    <scope>NUCLEOTIDE SEQUENCE [MRNA]</scope>
    <source>
        <tissue>Intestine</tissue>
    </source>
</reference>
<reference key="2">
    <citation type="submission" date="2003-01" db="EMBL/GenBank/DDBJ databases">
        <authorList>
            <consortium name="NIH - Xenopus Gene Collection (XGC) project"/>
        </authorList>
    </citation>
    <scope>NUCLEOTIDE SEQUENCE [LARGE SCALE MRNA]</scope>
    <source>
        <tissue>Embryo</tissue>
    </source>
</reference>
<gene>
    <name type="primary">arg2-a</name>
    <name type="synonym">arg1</name>
</gene>
<evidence type="ECO:0000250" key="1"/>
<evidence type="ECO:0000250" key="2">
    <source>
        <dbReference type="UniProtKB" id="P05089"/>
    </source>
</evidence>
<evidence type="ECO:0000250" key="3">
    <source>
        <dbReference type="UniProtKB" id="P53608"/>
    </source>
</evidence>
<evidence type="ECO:0000250" key="4">
    <source>
        <dbReference type="UniProtKB" id="P78540"/>
    </source>
</evidence>
<evidence type="ECO:0000255" key="5">
    <source>
        <dbReference type="PROSITE-ProRule" id="PRU00742"/>
    </source>
</evidence>
<sequence>MSIRSNFVRLLKKQVSIIKLQKKCSHSVAVIGAPFSKGQKRRGVEHGPAAIRSAGLIERLSNLGCNVCDFGDLHFSQVPNDELYNSIVKHPRTVGLACKVLAEEVSKAVGAGHTCVTLGGDHSLAFGSITGHAQQCPDLCVIWVDAHADINTPLTTPSGNLHGQPVSFLLRELQDKVPPIPGFSWAKPCLSKSDIVYIGLRDLDPAEQFILKNYDISYYSMRHIDCMGIKKVMEKTFDQLLGRRDRPIHLSFDIDAFDPALAPATGTPVIGGLTYREGVYITEEIHNTGMLSAVDLVEVNPVLAATSEEVKATANLAVDVIASCFGQTREGAHTRADTIIDVLPTPSTSYESDNEEQVRI</sequence>
<accession>Q91553</accession>
<accession>Q5D0B7</accession>
<dbReference type="EC" id="3.5.3.1" evidence="2"/>
<dbReference type="EMBL" id="U08406">
    <property type="protein sequence ID" value="AAA56891.1"/>
    <property type="molecule type" value="mRNA"/>
</dbReference>
<dbReference type="EMBL" id="BC043964">
    <property type="protein sequence ID" value="AAH43964.1"/>
    <property type="molecule type" value="mRNA"/>
</dbReference>
<dbReference type="PIR" id="I51663">
    <property type="entry name" value="I51663"/>
</dbReference>
<dbReference type="SMR" id="Q91553"/>
<dbReference type="AGR" id="Xenbase:XB-GENE-6251613"/>
<dbReference type="Xenbase" id="XB-GENE-6251613">
    <property type="gene designation" value="arg2.S"/>
</dbReference>
<dbReference type="OMA" id="YKEFRYA"/>
<dbReference type="UniPathway" id="UPA00158">
    <property type="reaction ID" value="UER00270"/>
</dbReference>
<dbReference type="Proteomes" id="UP000186698">
    <property type="component" value="Unplaced"/>
</dbReference>
<dbReference type="GO" id="GO:0005737">
    <property type="term" value="C:cytoplasm"/>
    <property type="evidence" value="ECO:0000318"/>
    <property type="project" value="GO_Central"/>
</dbReference>
<dbReference type="GO" id="GO:0005739">
    <property type="term" value="C:mitochondrion"/>
    <property type="evidence" value="ECO:0000318"/>
    <property type="project" value="GO_Central"/>
</dbReference>
<dbReference type="GO" id="GO:0004053">
    <property type="term" value="F:arginase activity"/>
    <property type="evidence" value="ECO:0000318"/>
    <property type="project" value="GO_Central"/>
</dbReference>
<dbReference type="GO" id="GO:0030145">
    <property type="term" value="F:manganese ion binding"/>
    <property type="evidence" value="ECO:0000318"/>
    <property type="project" value="GO_Central"/>
</dbReference>
<dbReference type="GO" id="GO:0019547">
    <property type="term" value="P:arginine catabolic process to ornithine"/>
    <property type="evidence" value="ECO:0000318"/>
    <property type="project" value="GO_Central"/>
</dbReference>
<dbReference type="GO" id="GO:0000050">
    <property type="term" value="P:urea cycle"/>
    <property type="evidence" value="ECO:0007669"/>
    <property type="project" value="UniProtKB-UniPathway"/>
</dbReference>
<dbReference type="CDD" id="cd09989">
    <property type="entry name" value="Arginase"/>
    <property type="match status" value="1"/>
</dbReference>
<dbReference type="FunFam" id="3.40.800.10:FF:000008">
    <property type="entry name" value="Arginase"/>
    <property type="match status" value="1"/>
</dbReference>
<dbReference type="Gene3D" id="3.40.800.10">
    <property type="entry name" value="Ureohydrolase domain"/>
    <property type="match status" value="1"/>
</dbReference>
<dbReference type="InterPro" id="IPR014033">
    <property type="entry name" value="Arginase"/>
</dbReference>
<dbReference type="InterPro" id="IPR006035">
    <property type="entry name" value="Ureohydrolase"/>
</dbReference>
<dbReference type="InterPro" id="IPR023696">
    <property type="entry name" value="Ureohydrolase_dom_sf"/>
</dbReference>
<dbReference type="InterPro" id="IPR020855">
    <property type="entry name" value="Ureohydrolase_Mn_BS"/>
</dbReference>
<dbReference type="NCBIfam" id="TIGR01229">
    <property type="entry name" value="rocF_arginase"/>
    <property type="match status" value="1"/>
</dbReference>
<dbReference type="PANTHER" id="PTHR43782">
    <property type="entry name" value="ARGINASE"/>
    <property type="match status" value="1"/>
</dbReference>
<dbReference type="PANTHER" id="PTHR43782:SF4">
    <property type="entry name" value="ARGINASE-2, MITOCHONDRIAL"/>
    <property type="match status" value="1"/>
</dbReference>
<dbReference type="Pfam" id="PF00491">
    <property type="entry name" value="Arginase"/>
    <property type="match status" value="1"/>
</dbReference>
<dbReference type="PIRSF" id="PIRSF036979">
    <property type="entry name" value="Arginase"/>
    <property type="match status" value="1"/>
</dbReference>
<dbReference type="PRINTS" id="PR00116">
    <property type="entry name" value="ARGINASE"/>
</dbReference>
<dbReference type="SUPFAM" id="SSF52768">
    <property type="entry name" value="Arginase/deacetylase"/>
    <property type="match status" value="1"/>
</dbReference>
<dbReference type="PROSITE" id="PS01053">
    <property type="entry name" value="ARGINASE_1"/>
    <property type="match status" value="1"/>
</dbReference>
<dbReference type="PROSITE" id="PS51409">
    <property type="entry name" value="ARGINASE_2"/>
    <property type="match status" value="1"/>
</dbReference>
<feature type="chain" id="PRO_0000173699" description="Arginase, non-hepatic 1">
    <location>
        <begin position="1"/>
        <end position="360"/>
    </location>
</feature>
<feature type="binding site" evidence="5">
    <location>
        <position position="122"/>
    </location>
    <ligand>
        <name>Mn(2+)</name>
        <dbReference type="ChEBI" id="CHEBI:29035"/>
        <label>1</label>
    </ligand>
</feature>
<feature type="binding site" evidence="5">
    <location>
        <position position="145"/>
    </location>
    <ligand>
        <name>Mn(2+)</name>
        <dbReference type="ChEBI" id="CHEBI:29035"/>
        <label>1</label>
    </ligand>
</feature>
<feature type="binding site" evidence="5">
    <location>
        <position position="145"/>
    </location>
    <ligand>
        <name>Mn(2+)</name>
        <dbReference type="ChEBI" id="CHEBI:29035"/>
        <label>2</label>
    </ligand>
</feature>
<feature type="binding site" evidence="2">
    <location>
        <begin position="147"/>
        <end position="151"/>
    </location>
    <ligand>
        <name>substrate</name>
    </ligand>
</feature>
<feature type="binding site" evidence="5">
    <location>
        <position position="147"/>
    </location>
    <ligand>
        <name>Mn(2+)</name>
        <dbReference type="ChEBI" id="CHEBI:29035"/>
        <label>2</label>
    </ligand>
</feature>
<feature type="binding site" evidence="5">
    <location>
        <position position="149"/>
    </location>
    <ligand>
        <name>Mn(2+)</name>
        <dbReference type="ChEBI" id="CHEBI:29035"/>
        <label>1</label>
    </ligand>
</feature>
<feature type="binding site" evidence="2">
    <location>
        <begin position="158"/>
        <end position="160"/>
    </location>
    <ligand>
        <name>substrate</name>
    </ligand>
</feature>
<feature type="binding site" evidence="2">
    <location>
        <position position="204"/>
    </location>
    <ligand>
        <name>substrate</name>
    </ligand>
</feature>
<feature type="binding site" evidence="5">
    <location>
        <position position="253"/>
    </location>
    <ligand>
        <name>Mn(2+)</name>
        <dbReference type="ChEBI" id="CHEBI:29035"/>
        <label>1</label>
    </ligand>
</feature>
<feature type="binding site" evidence="5">
    <location>
        <position position="253"/>
    </location>
    <ligand>
        <name>Mn(2+)</name>
        <dbReference type="ChEBI" id="CHEBI:29035"/>
        <label>2</label>
    </ligand>
</feature>
<feature type="binding site" evidence="5">
    <location>
        <position position="255"/>
    </location>
    <ligand>
        <name>Mn(2+)</name>
        <dbReference type="ChEBI" id="CHEBI:29035"/>
        <label>2</label>
    </ligand>
</feature>
<feature type="binding site" evidence="3">
    <location>
        <position position="267"/>
    </location>
    <ligand>
        <name>substrate</name>
    </ligand>
</feature>
<feature type="binding site" evidence="4">
    <location>
        <position position="298"/>
    </location>
    <ligand>
        <name>substrate</name>
    </ligand>
</feature>